<feature type="chain" id="PRO_0000166666" description="C4 phosphoenolpyruvate carboxylase">
    <location>
        <begin position="1"/>
        <end position="966"/>
    </location>
</feature>
<feature type="active site" evidence="1">
    <location>
        <position position="172"/>
    </location>
</feature>
<feature type="active site" evidence="1">
    <location>
        <position position="600"/>
    </location>
</feature>
<feature type="active site" evidence="1">
    <location>
        <position position="641"/>
    </location>
</feature>
<feature type="binding site" evidence="9 17">
    <location>
        <position position="283"/>
    </location>
    <ligand>
        <name>D-glucose 6-phosphate</name>
        <dbReference type="ChEBI" id="CHEBI:61548"/>
    </ligand>
</feature>
<feature type="binding site" evidence="9 17">
    <location>
        <position position="450"/>
    </location>
    <ligand>
        <name>D-glucose 6-phosphate</name>
        <dbReference type="ChEBI" id="CHEBI:61548"/>
    </ligand>
</feature>
<feature type="binding site" evidence="9 17">
    <location>
        <position position="597"/>
    </location>
    <ligand>
        <name>D-glucose 6-phosphate</name>
        <dbReference type="ChEBI" id="CHEBI:61548"/>
    </ligand>
</feature>
<feature type="binding site" evidence="9 17">
    <location>
        <position position="635"/>
    </location>
    <ligand>
        <name>D-glucose 6-phosphate</name>
        <dbReference type="ChEBI" id="CHEBI:61548"/>
    </ligand>
</feature>
<feature type="binding site" evidence="8 16">
    <location>
        <position position="641"/>
    </location>
    <ligand>
        <name>L-aspartate</name>
        <dbReference type="ChEBI" id="CHEBI:29991"/>
    </ligand>
</feature>
<feature type="binding site" evidence="9 17">
    <location>
        <position position="665"/>
    </location>
    <ligand>
        <name>D-glucose 6-phosphate</name>
        <dbReference type="ChEBI" id="CHEBI:61548"/>
    </ligand>
</feature>
<feature type="binding site" evidence="8 16">
    <location>
        <position position="673"/>
    </location>
    <ligand>
        <name>L-aspartate</name>
        <dbReference type="ChEBI" id="CHEBI:29991"/>
    </ligand>
</feature>
<feature type="binding site" evidence="9 17">
    <location>
        <position position="753"/>
    </location>
    <ligand>
        <name>D-glucose 6-phosphate</name>
        <dbReference type="ChEBI" id="CHEBI:61548"/>
    </ligand>
</feature>
<feature type="binding site" evidence="9 17">
    <location>
        <begin position="767"/>
        <end position="769"/>
    </location>
    <ligand>
        <name>D-glucose 6-phosphate</name>
        <dbReference type="ChEBI" id="CHEBI:61548"/>
    </ligand>
</feature>
<feature type="binding site" evidence="8 16">
    <location>
        <position position="829"/>
    </location>
    <ligand>
        <name>L-aspartate</name>
        <dbReference type="ChEBI" id="CHEBI:29991"/>
    </ligand>
</feature>
<feature type="binding site" evidence="8 16">
    <location>
        <position position="888"/>
    </location>
    <ligand>
        <name>L-aspartate</name>
        <dbReference type="ChEBI" id="CHEBI:29991"/>
    </ligand>
</feature>
<feature type="binding site" evidence="8 16">
    <location>
        <position position="964"/>
    </location>
    <ligand>
        <name>L-aspartate</name>
        <dbReference type="ChEBI" id="CHEBI:29991"/>
    </ligand>
</feature>
<feature type="modified residue" description="Phosphoserine" evidence="1">
    <location>
        <position position="11"/>
    </location>
</feature>
<feature type="mutagenesis site" description="Loss of catalytic activity." evidence="11">
    <original>R</original>
    <variation>G</variation>
    <location>
        <position position="450"/>
    </location>
</feature>
<feature type="mutagenesis site" description="Decreased bicarbonate-binding and lower catalytic activity." evidence="10">
    <original>K</original>
    <variation>R</variation>
    <variation>T</variation>
    <location>
        <position position="600"/>
    </location>
</feature>
<feature type="mutagenesis site" description="Loss of catalytic activity." evidence="11">
    <original>R</original>
    <variation>G</variation>
    <location>
        <position position="767"/>
    </location>
</feature>
<feature type="mutagenesis site" description="Alteration of C4-specific kinetics, but no effect on L-malate tolerance." evidence="4 7">
    <original>S</original>
    <variation>A</variation>
    <location>
        <position position="774"/>
    </location>
</feature>
<feature type="mutagenesis site" description="Decreased substrate binding and lower catalytic activity." evidence="11">
    <original>K</original>
    <variation>G</variation>
    <location>
        <position position="829"/>
    </location>
</feature>
<feature type="sequence conflict" description="In Ref. 3; CAA45504." evidence="15" ref="3">
    <original>E</original>
    <variation>D</variation>
    <location>
        <position position="77"/>
    </location>
</feature>
<feature type="sequence conflict" description="In Ref. 3; CAA45504." evidence="15" ref="3">
    <original>T</original>
    <variation>P</variation>
    <location>
        <position position="88"/>
    </location>
</feature>
<feature type="sequence conflict" description="In Ref. 3; CAA45504." evidence="15" ref="3">
    <original>L</original>
    <variation>V</variation>
    <location>
        <position position="111"/>
    </location>
</feature>
<feature type="sequence conflict" description="In Ref. 3; CAA45504." evidence="15" ref="3">
    <original>V</original>
    <variation>I</variation>
    <location>
        <position position="177"/>
    </location>
</feature>
<feature type="sequence conflict" description="In Ref. 3; CAA45504." evidence="15" ref="3">
    <original>N</original>
    <variation>KH</variation>
    <location>
        <position position="291"/>
    </location>
</feature>
<feature type="sequence conflict" description="In Ref. 3; CAA45504." evidence="15" ref="3">
    <original>R</original>
    <variation>Q</variation>
    <location>
        <position position="358"/>
    </location>
</feature>
<feature type="sequence conflict" description="In Ref. 4; CAA81072." evidence="15" ref="4">
    <original>E</original>
    <variation>K</variation>
    <location>
        <position position="397"/>
    </location>
</feature>
<feature type="sequence conflict" description="In Ref. 3; CAA45504." evidence="15" ref="3">
    <original>C</original>
    <variation>S</variation>
    <location>
        <position position="420"/>
    </location>
</feature>
<feature type="sequence conflict" description="In Ref. 3; CAA45504." evidence="15" ref="3">
    <original>K</original>
    <variation>N</variation>
    <location>
        <position position="513"/>
    </location>
</feature>
<feature type="helix" evidence="18">
    <location>
        <begin position="9"/>
        <end position="19"/>
    </location>
</feature>
<feature type="helix" evidence="18">
    <location>
        <begin position="30"/>
        <end position="49"/>
    </location>
</feature>
<feature type="helix" evidence="18">
    <location>
        <begin position="51"/>
        <end position="70"/>
    </location>
</feature>
<feature type="helix" evidence="18">
    <location>
        <begin position="73"/>
        <end position="84"/>
    </location>
</feature>
<feature type="helix" evidence="18">
    <location>
        <begin position="88"/>
        <end position="115"/>
    </location>
</feature>
<feature type="helix" evidence="18">
    <location>
        <begin position="126"/>
        <end position="130"/>
    </location>
</feature>
<feature type="turn" evidence="18">
    <location>
        <begin position="132"/>
        <end position="134"/>
    </location>
</feature>
<feature type="helix" evidence="18">
    <location>
        <begin position="138"/>
        <end position="148"/>
    </location>
</feature>
<feature type="helix" evidence="18">
    <location>
        <begin position="153"/>
        <end position="161"/>
    </location>
</feature>
<feature type="strand" evidence="18">
    <location>
        <begin position="164"/>
        <end position="169"/>
    </location>
</feature>
<feature type="helix" evidence="18">
    <location>
        <begin position="179"/>
        <end position="195"/>
    </location>
</feature>
<feature type="helix" evidence="18">
    <location>
        <begin position="202"/>
        <end position="220"/>
    </location>
</feature>
<feature type="helix" evidence="18">
    <location>
        <begin position="232"/>
        <end position="239"/>
    </location>
</feature>
<feature type="helix" evidence="18">
    <location>
        <begin position="241"/>
        <end position="245"/>
    </location>
</feature>
<feature type="helix" evidence="18">
    <location>
        <begin position="247"/>
        <end position="263"/>
    </location>
</feature>
<feature type="turn" evidence="18">
    <location>
        <begin position="264"/>
        <end position="266"/>
    </location>
</feature>
<feature type="strand" evidence="18">
    <location>
        <begin position="278"/>
        <end position="282"/>
    </location>
</feature>
<feature type="turn" evidence="18">
    <location>
        <begin position="284"/>
        <end position="286"/>
    </location>
</feature>
<feature type="helix" evidence="18">
    <location>
        <begin position="296"/>
        <end position="324"/>
    </location>
</feature>
<feature type="helix" evidence="18">
    <location>
        <begin position="332"/>
        <end position="343"/>
    </location>
</feature>
<feature type="helix" evidence="18">
    <location>
        <begin position="364"/>
        <end position="389"/>
    </location>
</feature>
<feature type="helix" evidence="18">
    <location>
        <begin position="396"/>
        <end position="398"/>
    </location>
</feature>
<feature type="helix" evidence="18">
    <location>
        <begin position="403"/>
        <end position="419"/>
    </location>
</feature>
<feature type="helix" evidence="18">
    <location>
        <begin position="423"/>
        <end position="426"/>
    </location>
</feature>
<feature type="helix" evidence="18">
    <location>
        <begin position="429"/>
        <end position="440"/>
    </location>
</feature>
<feature type="strand" evidence="18">
    <location>
        <begin position="443"/>
        <end position="452"/>
    </location>
</feature>
<feature type="helix" evidence="18">
    <location>
        <begin position="453"/>
        <end position="466"/>
    </location>
</feature>
<feature type="turn" evidence="18">
    <location>
        <begin position="472"/>
        <end position="474"/>
    </location>
</feature>
<feature type="helix" evidence="18">
    <location>
        <begin position="477"/>
        <end position="488"/>
    </location>
</feature>
<feature type="helix" evidence="18">
    <location>
        <begin position="503"/>
        <end position="517"/>
    </location>
</feature>
<feature type="helix" evidence="18">
    <location>
        <begin position="520"/>
        <end position="522"/>
    </location>
</feature>
<feature type="strand" evidence="18">
    <location>
        <begin position="523"/>
        <end position="529"/>
    </location>
</feature>
<feature type="helix" evidence="18">
    <location>
        <begin position="534"/>
        <end position="546"/>
    </location>
</feature>
<feature type="strand" evidence="18">
    <location>
        <begin position="555"/>
        <end position="559"/>
    </location>
</feature>
<feature type="helix" evidence="18">
    <location>
        <begin position="562"/>
        <end position="577"/>
    </location>
</feature>
<feature type="helix" evidence="18">
    <location>
        <begin position="579"/>
        <end position="585"/>
    </location>
</feature>
<feature type="strand" evidence="18">
    <location>
        <begin position="588"/>
        <end position="593"/>
    </location>
</feature>
<feature type="helix" evidence="18">
    <location>
        <begin position="595"/>
        <end position="602"/>
    </location>
</feature>
<feature type="helix" evidence="18">
    <location>
        <begin position="604"/>
        <end position="624"/>
    </location>
</feature>
<feature type="strand" evidence="18">
    <location>
        <begin position="628"/>
        <end position="633"/>
    </location>
</feature>
<feature type="helix" evidence="18">
    <location>
        <begin position="638"/>
        <end position="640"/>
    </location>
</feature>
<feature type="helix" evidence="18">
    <location>
        <begin position="644"/>
        <end position="651"/>
    </location>
</feature>
<feature type="strand" evidence="18">
    <location>
        <begin position="661"/>
        <end position="666"/>
    </location>
</feature>
<feature type="helix" evidence="18">
    <location>
        <begin position="668"/>
        <end position="675"/>
    </location>
</feature>
<feature type="helix" evidence="18">
    <location>
        <begin position="678"/>
        <end position="697"/>
    </location>
</feature>
<feature type="helix" evidence="18">
    <location>
        <begin position="705"/>
        <end position="726"/>
    </location>
</feature>
<feature type="helix" evidence="18">
    <location>
        <begin position="732"/>
        <end position="739"/>
    </location>
</feature>
<feature type="helix" evidence="18">
    <location>
        <begin position="742"/>
        <end position="746"/>
    </location>
</feature>
<feature type="helix" evidence="18">
    <location>
        <begin position="762"/>
        <end position="765"/>
    </location>
</feature>
<feature type="helix" evidence="18">
    <location>
        <begin position="768"/>
        <end position="777"/>
    </location>
</feature>
<feature type="helix" evidence="18">
    <location>
        <begin position="782"/>
        <end position="785"/>
    </location>
</feature>
<feature type="helix" evidence="18">
    <location>
        <begin position="788"/>
        <end position="798"/>
    </location>
</feature>
<feature type="helix" evidence="18">
    <location>
        <begin position="801"/>
        <end position="812"/>
    </location>
</feature>
<feature type="helix" evidence="18">
    <location>
        <begin position="814"/>
        <end position="828"/>
    </location>
</feature>
<feature type="helix" evidence="18">
    <location>
        <begin position="832"/>
        <end position="842"/>
    </location>
</feature>
<feature type="helix" evidence="18">
    <location>
        <begin position="845"/>
        <end position="847"/>
    </location>
</feature>
<feature type="helix" evidence="18">
    <location>
        <begin position="848"/>
        <end position="869"/>
    </location>
</feature>
<feature type="turn" evidence="18">
    <location>
        <begin position="874"/>
        <end position="877"/>
    </location>
</feature>
<feature type="helix" evidence="18">
    <location>
        <begin position="879"/>
        <end position="907"/>
    </location>
</feature>
<feature type="helix" evidence="18">
    <location>
        <begin position="947"/>
        <end position="962"/>
    </location>
</feature>
<dbReference type="EC" id="4.1.1.31" evidence="4 5"/>
<dbReference type="EMBL" id="X61304">
    <property type="protein sequence ID" value="CAA43601.1"/>
    <property type="molecule type" value="mRNA"/>
</dbReference>
<dbReference type="EMBL" id="X64143">
    <property type="protein sequence ID" value="CAA45504.1"/>
    <property type="molecule type" value="Genomic_DNA"/>
</dbReference>
<dbReference type="EMBL" id="Z25853">
    <property type="protein sequence ID" value="CAA81072.1"/>
    <property type="molecule type" value="mRNA"/>
</dbReference>
<dbReference type="PIR" id="S18318">
    <property type="entry name" value="S18318"/>
</dbReference>
<dbReference type="PIR" id="S25082">
    <property type="entry name" value="S25082"/>
</dbReference>
<dbReference type="PIR" id="S37072">
    <property type="entry name" value="S37072"/>
</dbReference>
<dbReference type="PDB" id="3ZGE">
    <property type="method" value="X-ray"/>
    <property type="resolution" value="2.49 A"/>
    <property type="chains" value="A/B=1-966"/>
</dbReference>
<dbReference type="PDB" id="4BXC">
    <property type="method" value="X-ray"/>
    <property type="resolution" value="2.86 A"/>
    <property type="chains" value="A/B=1-966"/>
</dbReference>
<dbReference type="PDB" id="4BXH">
    <property type="method" value="X-ray"/>
    <property type="resolution" value="2.24 A"/>
    <property type="chains" value="A/B=1-966"/>
</dbReference>
<dbReference type="PDBsum" id="3ZGE"/>
<dbReference type="PDBsum" id="4BXC"/>
<dbReference type="PDBsum" id="4BXH"/>
<dbReference type="SMR" id="P30694"/>
<dbReference type="BRENDA" id="4.1.1.31">
    <property type="organism ID" value="2270"/>
</dbReference>
<dbReference type="SABIO-RK" id="P30694"/>
<dbReference type="UniPathway" id="UPA00322"/>
<dbReference type="EvolutionaryTrace" id="P30694"/>
<dbReference type="GO" id="GO:0048046">
    <property type="term" value="C:apoplast"/>
    <property type="evidence" value="ECO:0007669"/>
    <property type="project" value="TreeGrafter"/>
</dbReference>
<dbReference type="GO" id="GO:0009507">
    <property type="term" value="C:chloroplast"/>
    <property type="evidence" value="ECO:0007669"/>
    <property type="project" value="TreeGrafter"/>
</dbReference>
<dbReference type="GO" id="GO:0005829">
    <property type="term" value="C:cytosol"/>
    <property type="evidence" value="ECO:0007669"/>
    <property type="project" value="TreeGrafter"/>
</dbReference>
<dbReference type="GO" id="GO:0008964">
    <property type="term" value="F:phosphoenolpyruvate carboxylase activity"/>
    <property type="evidence" value="ECO:0000314"/>
    <property type="project" value="UniProtKB"/>
</dbReference>
<dbReference type="GO" id="GO:0009760">
    <property type="term" value="P:C4 photosynthesis"/>
    <property type="evidence" value="ECO:0000304"/>
    <property type="project" value="UniProtKB"/>
</dbReference>
<dbReference type="GO" id="GO:0015977">
    <property type="term" value="P:carbon fixation"/>
    <property type="evidence" value="ECO:0000314"/>
    <property type="project" value="UniProtKB"/>
</dbReference>
<dbReference type="GO" id="GO:0048366">
    <property type="term" value="P:leaf development"/>
    <property type="evidence" value="ECO:0007669"/>
    <property type="project" value="TreeGrafter"/>
</dbReference>
<dbReference type="GO" id="GO:0006099">
    <property type="term" value="P:tricarboxylic acid cycle"/>
    <property type="evidence" value="ECO:0007669"/>
    <property type="project" value="InterPro"/>
</dbReference>
<dbReference type="FunFam" id="1.20.1440.90:FF:000001">
    <property type="entry name" value="Phosphoenolpyruvate carboxylase 1"/>
    <property type="match status" value="1"/>
</dbReference>
<dbReference type="Gene3D" id="1.20.1440.90">
    <property type="entry name" value="Phosphoenolpyruvate/pyruvate domain"/>
    <property type="match status" value="1"/>
</dbReference>
<dbReference type="HAMAP" id="MF_00595">
    <property type="entry name" value="PEPcase_type1"/>
    <property type="match status" value="1"/>
</dbReference>
<dbReference type="InterPro" id="IPR021135">
    <property type="entry name" value="PEP_COase"/>
</dbReference>
<dbReference type="InterPro" id="IPR022805">
    <property type="entry name" value="PEP_COase_bac/pln-type"/>
</dbReference>
<dbReference type="InterPro" id="IPR018129">
    <property type="entry name" value="PEP_COase_Lys_AS"/>
</dbReference>
<dbReference type="InterPro" id="IPR033129">
    <property type="entry name" value="PEPCASE_His_AS"/>
</dbReference>
<dbReference type="InterPro" id="IPR015813">
    <property type="entry name" value="Pyrv/PenolPyrv_kinase-like_dom"/>
</dbReference>
<dbReference type="NCBIfam" id="NF000584">
    <property type="entry name" value="PRK00009.1"/>
    <property type="match status" value="1"/>
</dbReference>
<dbReference type="PANTHER" id="PTHR30523">
    <property type="entry name" value="PHOSPHOENOLPYRUVATE CARBOXYLASE"/>
    <property type="match status" value="1"/>
</dbReference>
<dbReference type="PANTHER" id="PTHR30523:SF33">
    <property type="entry name" value="PHOSPHOENOLPYRUVATE CARBOXYLASE 3"/>
    <property type="match status" value="1"/>
</dbReference>
<dbReference type="Pfam" id="PF00311">
    <property type="entry name" value="PEPcase"/>
    <property type="match status" value="1"/>
</dbReference>
<dbReference type="PRINTS" id="PR00150">
    <property type="entry name" value="PEPCARBXLASE"/>
</dbReference>
<dbReference type="SUPFAM" id="SSF51621">
    <property type="entry name" value="Phosphoenolpyruvate/pyruvate domain"/>
    <property type="match status" value="1"/>
</dbReference>
<dbReference type="PROSITE" id="PS00781">
    <property type="entry name" value="PEPCASE_1"/>
    <property type="match status" value="1"/>
</dbReference>
<dbReference type="PROSITE" id="PS00393">
    <property type="entry name" value="PEPCASE_2"/>
    <property type="match status" value="1"/>
</dbReference>
<name>CAPPA_FLATR</name>
<sequence length="966" mass="110406">MANRNVEKLASIDAQLRLLVPGKVSEDDKLVEYDALLLDKFLDILQDLHGEDLKEAVQQCYELSAEYEGKHDPKKLEELGSLLTSLDTGDSIVIAKAFSHMLNLANLAEELQIAYRRRIKLKSGDFADEANATTESDIEETFKRLVHKLNKSPEEVFDALKNQTVELVLTAHPTQSVRRSLLQKHGRIRNCLAQLYAKDITPDDKQELDEALHREIQAAFRTDEIRRTPPTPQDEMRAGMSYFHETIWKGVPKFLRRVDTALKNIGINERFPYNAPLIQFSSWMGGDRDGNPRVTPEVTRDVCLLARMMTSNMYFSQIEDLMIEMSMWRCNSELRVRAEELYRTARKDVKHYIEFWKRIPPNQPYRVILGDVRDKLYNTRERSRHLLVDGKSDIPDEAVYTNVEQLLEPLELCYRSLCDCGDHVIADGSLLDFLRQVSTFGLSLVKLDIRQESDRHTEVLDAITQHLGIGSYREWSEEKRQEWLLAELSGKRPLIGPDLPKTEEVKDCLDTFKVLAELPSDCFGAYIISMATSTSDVLAVELLQREYHIKHPLRVVPLFEKLADLEAAPAAMTRLFSMDWYRNRIDGKQEVMIGYSDSGKDAGRFSAAWQLYKTQEQIVKIAKEFGVKLVIFHGRGGTVGRGGGPTHLALLSQPPDTINGSLRVTVQGEVIEQSFGEEHLCFRTLQRFCAATLEHGMNPPISPRPEWRELMDQMAVVATEEYRSVVFKEPRFVEYFRLATPELEFGRMNIGSRPSKRKPSGGIESLRAIPWIFSWTQTRFHLPVWLGFGAAFKHAIQKDSKNLQMLQEMYKTWPFFRVTIDLVEMVFAKGNPGIAALNDKLLVSEDLRPFGESLRANYEETKNYLLKIAGHKDLLEGDPYLKQGIRLRDPYITTLNVCQAYTLKRIRDPNYHVTLRPHISKEYAAEPSKPADELIHLNPTSEYAPGLEDTLILTMKGIAAGMQNTG</sequence>
<evidence type="ECO:0000250" key="1">
    <source>
        <dbReference type="UniProtKB" id="P04711"/>
    </source>
</evidence>
<evidence type="ECO:0000250" key="2">
    <source>
        <dbReference type="UniProtKB" id="P27154"/>
    </source>
</evidence>
<evidence type="ECO:0000250" key="3">
    <source>
        <dbReference type="UniProtKB" id="Q9MAH0"/>
    </source>
</evidence>
<evidence type="ECO:0000269" key="4">
    <source>
    </source>
</evidence>
<evidence type="ECO:0000269" key="5">
    <source>
    </source>
</evidence>
<evidence type="ECO:0000269" key="6">
    <source>
    </source>
</evidence>
<evidence type="ECO:0000269" key="7">
    <source>
    </source>
</evidence>
<evidence type="ECO:0000269" key="8">
    <source>
    </source>
</evidence>
<evidence type="ECO:0000269" key="9">
    <source>
    </source>
</evidence>
<evidence type="ECO:0000269" key="10">
    <source>
    </source>
</evidence>
<evidence type="ECO:0000269" key="11">
    <source>
    </source>
</evidence>
<evidence type="ECO:0000269" key="12">
    <source>
    </source>
</evidence>
<evidence type="ECO:0000303" key="13">
    <source>
    </source>
</evidence>
<evidence type="ECO:0000303" key="14">
    <source>
    </source>
</evidence>
<evidence type="ECO:0000305" key="15"/>
<evidence type="ECO:0007744" key="16">
    <source>
        <dbReference type="PDB" id="3ZGE"/>
    </source>
</evidence>
<evidence type="ECO:0007744" key="17">
    <source>
        <dbReference type="PDB" id="4BXC"/>
    </source>
</evidence>
<evidence type="ECO:0007829" key="18">
    <source>
        <dbReference type="PDB" id="4BXH"/>
    </source>
</evidence>
<proteinExistence type="evidence at protein level"/>
<keyword id="KW-0002">3D-structure</keyword>
<keyword id="KW-0021">Allosteric enzyme</keyword>
<keyword id="KW-0120">Carbon dioxide fixation</keyword>
<keyword id="KW-0963">Cytoplasm</keyword>
<keyword id="KW-0456">Lyase</keyword>
<keyword id="KW-0460">Magnesium</keyword>
<keyword id="KW-0597">Phosphoprotein</keyword>
<keyword id="KW-0602">Photosynthesis</keyword>
<organism>
    <name type="scientific">Flaveria trinervia</name>
    <name type="common">Clustered yellowtops</name>
    <name type="synonym">Oedera trinervia</name>
    <dbReference type="NCBI Taxonomy" id="4227"/>
    <lineage>
        <taxon>Eukaryota</taxon>
        <taxon>Viridiplantae</taxon>
        <taxon>Streptophyta</taxon>
        <taxon>Embryophyta</taxon>
        <taxon>Tracheophyta</taxon>
        <taxon>Spermatophyta</taxon>
        <taxon>Magnoliopsida</taxon>
        <taxon>eudicotyledons</taxon>
        <taxon>Gunneridae</taxon>
        <taxon>Pentapetalae</taxon>
        <taxon>asterids</taxon>
        <taxon>campanulids</taxon>
        <taxon>Asterales</taxon>
        <taxon>Asteraceae</taxon>
        <taxon>Asteroideae</taxon>
        <taxon>Heliantheae alliance</taxon>
        <taxon>Tageteae</taxon>
        <taxon>Flaveria</taxon>
    </lineage>
</organism>
<protein>
    <recommendedName>
        <fullName evidence="13">C4 phosphoenolpyruvate carboxylase</fullName>
        <shortName evidence="13">C4 PEPC</shortName>
        <shortName evidence="13">C4 PEPCase</shortName>
        <shortName evidence="14">ppcA</shortName>
        <ecNumber evidence="4 5">4.1.1.31</ecNumber>
    </recommendedName>
    <alternativeName>
        <fullName evidence="13">Photosynthetic PEPCase</fullName>
    </alternativeName>
</protein>
<accession>P30694</accession>
<accession>Q01648</accession>
<accession>Q42730</accession>
<comment type="function">
    <text evidence="4 5">Forms oxaloacetate through the carboxylation of phosphoenolpyruvate (PEP). Catalyzes the first step of C4 photosynthesis.</text>
</comment>
<comment type="catalytic activity">
    <reaction evidence="4 5">
        <text>oxaloacetate + phosphate = phosphoenolpyruvate + hydrogencarbonate</text>
        <dbReference type="Rhea" id="RHEA:28370"/>
        <dbReference type="ChEBI" id="CHEBI:16452"/>
        <dbReference type="ChEBI" id="CHEBI:17544"/>
        <dbReference type="ChEBI" id="CHEBI:43474"/>
        <dbReference type="ChEBI" id="CHEBI:58702"/>
        <dbReference type="EC" id="4.1.1.31"/>
    </reaction>
</comment>
<comment type="cofactor">
    <cofactor evidence="3">
        <name>Mg(2+)</name>
        <dbReference type="ChEBI" id="CHEBI:18420"/>
    </cofactor>
</comment>
<comment type="activity regulation">
    <text evidence="1 8 9">5 fold activation by the allosteric regulator glucose-6-phosphate (PubMed:24043710). Low sensitivity to inhibition by L-malate and L-aspartate (PubMed:23443546). Up-regulated by light-reversible phosphorylation (By similarity).</text>
</comment>
<comment type="biophysicochemical properties">
    <kinetics>
        <Vmax evidence="5">27.0 umol/min/mg enzyme</Vmax>
    </kinetics>
</comment>
<comment type="pathway">
    <text evidence="4 5">Photosynthesis; C4 acid pathway.</text>
</comment>
<comment type="subunit">
    <text evidence="3">Homotetramer.</text>
</comment>
<comment type="subcellular location">
    <subcellularLocation>
        <location evidence="2">Cytoplasm</location>
    </subcellularLocation>
</comment>
<comment type="tissue specificity">
    <text evidence="6 12">Expressed in mesophyll cells, but not in bundle-sheath, roots, stems and flowers.</text>
</comment>
<comment type="domain">
    <text evidence="7">Region 2 (296-437) and region 5 (645-966) are involved in the acquisition of C4-specific properties. Region 5 (645-966) is involved in L-malate tolerance.</text>
</comment>
<comment type="miscellaneous">
    <text evidence="4">Ser-774 is strongly involved in determining allosteric behavior of C4 PEPC.</text>
</comment>
<comment type="similarity">
    <text evidence="15">Belongs to the PEPCase type 1 family.</text>
</comment>
<gene>
    <name evidence="14" type="primary">PPCA</name>
</gene>
<reference key="1">
    <citation type="journal article" date="1991" name="FEBS Lett.">
        <title>Multiple cDNAs of phosphoenolpyruvate carboxylase in the C4 dicot Flaveria trinervia.</title>
        <authorList>
            <person name="Poetsch W."/>
            <person name="Hermans J."/>
            <person name="Westhoff P."/>
        </authorList>
    </citation>
    <scope>NUCLEOTIDE SEQUENCE [MRNA]</scope>
    <scope>TISSUE SPECIFICITY</scope>
    <source>
        <tissue>Leaf</tissue>
    </source>
</reference>
<reference key="2">
    <citation type="submission" date="1994-06" db="EMBL/GenBank/DDBJ databases">
        <authorList>
            <person name="Poetsch W."/>
        </authorList>
    </citation>
    <scope>SEQUENCE REVISION</scope>
</reference>
<reference key="3">
    <citation type="journal article" date="1992" name="Mol. Gen. Genet.">
        <title>Homologous genes for the C4 isoform of phosphoenolpyruvate carboxylase in a C3 and a C4 Flaveria species.</title>
        <authorList>
            <person name="Hermans J."/>
            <person name="Westhoff P."/>
        </authorList>
    </citation>
    <scope>NUCLEOTIDE SEQUENCE [GENOMIC DNA]</scope>
</reference>
<reference key="4">
    <citation type="submission" date="1993-09" db="EMBL/GenBank/DDBJ databases">
        <authorList>
            <person name="Bauwe H."/>
        </authorList>
    </citation>
    <scope>NUCLEOTIDE SEQUENCE [MRNA]</scope>
    <source>
        <tissue>Leaf</tissue>
    </source>
</reference>
<reference key="5">
    <citation type="journal article" date="1995" name="FEBS Lett.">
        <title>Site-directed mutagenesis of Lys600 in phosphoenolpyruvate carboxylase of Flaveria trinervia: its roles in catalytic and regulatory functions.</title>
        <authorList>
            <person name="Gao Y."/>
            <person name="Woo K.C."/>
        </authorList>
    </citation>
    <scope>MUTAGENESIS OF LYS-600</scope>
</reference>
<reference key="6">
    <citation type="journal article" date="1996" name="FEBS Lett.">
        <title>Site-directed mutagenesis of Flaveria trinervia phosphoenolpyruvate carboxylase: Arg450 and Arg767 are essential for catalytic activity and Lys829 affects substrate binding.</title>
        <authorList>
            <person name="Gao Y."/>
            <person name="Woo K.C."/>
        </authorList>
    </citation>
    <scope>MUTAGENESIS OF ARG-450; ARG-767 AND LYS-829</scope>
</reference>
<reference key="7">
    <citation type="journal article" date="1997" name="Plant Mol. Biol.">
        <title>The phosphoenolpyruvate carboxylase (ppc) gene family of Flaveria trinervia (C4) and F. pringlei (C3): molecular characterization and expression analysis of the ppcB and ppcC genes.</title>
        <authorList>
            <person name="Ernst K."/>
            <person name="Westhoff P."/>
        </authorList>
    </citation>
    <scope>TISSUE SPECIFICITY</scope>
</reference>
<reference key="8">
    <citation type="journal article" date="2000" name="J. Biol. Chem.">
        <title>Evolution of C4 phosphoenolpyruvate carboxylase in Flaveria, a conserved serine residue in the carboxyl-terminal part of the enzyme is a major determinant for C4-specific characteristics.</title>
        <authorList>
            <person name="Blasing O.E."/>
            <person name="Westhoff P."/>
            <person name="Svensson P."/>
        </authorList>
    </citation>
    <scope>CHARACTERIZATION</scope>
    <scope>FUNCTION</scope>
    <scope>CATALYTIC ACTIVITY</scope>
    <scope>MUTAGENESIS OF SER-774</scope>
    <scope>PATHWAY</scope>
</reference>
<reference key="9">
    <citation type="journal article" date="2002" name="Planta">
        <title>The non-photosynthetic phosphoenolpyruvate carboxylases of the C4 dicot Flaveria trinervia -- implications for the evolution of C4 photosynthesis.</title>
        <authorList>
            <person name="Blasing O.E."/>
            <person name="Ernst K."/>
            <person name="Streubel M."/>
            <person name="Westhoff P."/>
            <person name="Svensson P."/>
        </authorList>
    </citation>
    <scope>BIOPHYSICOCHEMICAL PROPERTIES</scope>
    <scope>FUNCTION</scope>
    <scope>CATALYTIC ACTIVITY</scope>
</reference>
<reference key="10">
    <citation type="journal article" date="2008" name="Plant Cell Environ.">
        <title>Evolution of C(4) phosphoenolpyruvate carboxylase in Flaveria: determinants for high tolerance towards the inhibitor L-malate.</title>
        <authorList>
            <person name="Jacobs B."/>
            <person name="Engelmann S."/>
            <person name="Westhoff P."/>
            <person name="Gowik U."/>
        </authorList>
    </citation>
    <scope>CHARACTERIZATION</scope>
    <scope>MUTAGENESIS OF SER-774</scope>
    <scope>DOMAIN</scope>
</reference>
<reference key="11">
    <citation type="journal article" date="2013" name="Nat. Commun.">
        <title>Greater efficiency of photosynthetic carbon fixation due to single amino-acid substitution.</title>
        <authorList>
            <person name="Paulus J.K."/>
            <person name="Schlieper D."/>
            <person name="Groth G."/>
        </authorList>
    </citation>
    <scope>X-RAY CRYSTALLOGRAPHY (2.49 ANGSTROMS) IN COMPLEX WITH L-ASPARTATE</scope>
    <scope>ACTIVITY REGULATION</scope>
</reference>
<reference key="12">
    <citation type="journal article" date="2014" name="Mol. Plant">
        <title>Resolving the activation site of positive regulators in plant phosphoenolpyruvate carboxylase.</title>
        <authorList>
            <person name="Schlieper D."/>
            <person name="Forster K."/>
            <person name="Paulus J.K."/>
            <person name="Groth G."/>
        </authorList>
    </citation>
    <scope>X-RAY CRYSTALLOGRAPHY (2.24 ANGSTROMS) IN COMPLEX WITH GLUCOSE-6-PHOSPHATE</scope>
    <scope>ACTIVITY REGULATION</scope>
</reference>